<reference key="1">
    <citation type="submission" date="2006-12" db="EMBL/GenBank/DDBJ databases">
        <title>Bifidobacterium adolescentis complete genome sequence.</title>
        <authorList>
            <person name="Suzuki T."/>
            <person name="Tsuda Y."/>
            <person name="Kanou N."/>
            <person name="Inoue T."/>
            <person name="Kumazaki K."/>
            <person name="Nagano S."/>
            <person name="Hirai S."/>
            <person name="Tanaka K."/>
            <person name="Watanabe K."/>
        </authorList>
    </citation>
    <scope>NUCLEOTIDE SEQUENCE [LARGE SCALE GENOMIC DNA]</scope>
    <source>
        <strain>ATCC 15703 / DSM 20083 / NCTC 11814 / E194a</strain>
    </source>
</reference>
<accession>A1A0B7</accession>
<evidence type="ECO:0000255" key="1">
    <source>
        <dbReference type="HAMAP-Rule" id="MF_00176"/>
    </source>
</evidence>
<dbReference type="EC" id="6.1.1.11" evidence="1"/>
<dbReference type="EMBL" id="AP009256">
    <property type="protein sequence ID" value="BAF39150.1"/>
    <property type="molecule type" value="Genomic_DNA"/>
</dbReference>
<dbReference type="RefSeq" id="WP_011742849.1">
    <property type="nucleotide sequence ID" value="NZ_CAXVNC010000001.1"/>
</dbReference>
<dbReference type="SMR" id="A1A0B7"/>
<dbReference type="STRING" id="367928.BAD_0369"/>
<dbReference type="PaxDb" id="1680-BADO_0375"/>
<dbReference type="GeneID" id="4557427"/>
<dbReference type="KEGG" id="bad:BAD_0369"/>
<dbReference type="HOGENOM" id="CLU_023797_0_1_11"/>
<dbReference type="UniPathway" id="UPA00906">
    <property type="reaction ID" value="UER00895"/>
</dbReference>
<dbReference type="Proteomes" id="UP000008702">
    <property type="component" value="Chromosome"/>
</dbReference>
<dbReference type="GO" id="GO:0005737">
    <property type="term" value="C:cytoplasm"/>
    <property type="evidence" value="ECO:0007669"/>
    <property type="project" value="UniProtKB-SubCell"/>
</dbReference>
<dbReference type="GO" id="GO:0005524">
    <property type="term" value="F:ATP binding"/>
    <property type="evidence" value="ECO:0007669"/>
    <property type="project" value="UniProtKB-UniRule"/>
</dbReference>
<dbReference type="GO" id="GO:0004828">
    <property type="term" value="F:serine-tRNA ligase activity"/>
    <property type="evidence" value="ECO:0007669"/>
    <property type="project" value="UniProtKB-UniRule"/>
</dbReference>
<dbReference type="GO" id="GO:0016260">
    <property type="term" value="P:selenocysteine biosynthetic process"/>
    <property type="evidence" value="ECO:0007669"/>
    <property type="project" value="UniProtKB-UniRule"/>
</dbReference>
<dbReference type="GO" id="GO:0006434">
    <property type="term" value="P:seryl-tRNA aminoacylation"/>
    <property type="evidence" value="ECO:0007669"/>
    <property type="project" value="UniProtKB-UniRule"/>
</dbReference>
<dbReference type="CDD" id="cd00770">
    <property type="entry name" value="SerRS_core"/>
    <property type="match status" value="1"/>
</dbReference>
<dbReference type="Gene3D" id="3.30.930.10">
    <property type="entry name" value="Bira Bifunctional Protein, Domain 2"/>
    <property type="match status" value="1"/>
</dbReference>
<dbReference type="Gene3D" id="1.10.287.40">
    <property type="entry name" value="Serine-tRNA synthetase, tRNA binding domain"/>
    <property type="match status" value="1"/>
</dbReference>
<dbReference type="HAMAP" id="MF_00176">
    <property type="entry name" value="Ser_tRNA_synth_type1"/>
    <property type="match status" value="1"/>
</dbReference>
<dbReference type="InterPro" id="IPR002314">
    <property type="entry name" value="aa-tRNA-synt_IIb"/>
</dbReference>
<dbReference type="InterPro" id="IPR006195">
    <property type="entry name" value="aa-tRNA-synth_II"/>
</dbReference>
<dbReference type="InterPro" id="IPR045864">
    <property type="entry name" value="aa-tRNA-synth_II/BPL/LPL"/>
</dbReference>
<dbReference type="InterPro" id="IPR002317">
    <property type="entry name" value="Ser-tRNA-ligase_type_1"/>
</dbReference>
<dbReference type="InterPro" id="IPR015866">
    <property type="entry name" value="Ser-tRNA-synth_1_N"/>
</dbReference>
<dbReference type="InterPro" id="IPR042103">
    <property type="entry name" value="SerRS_1_N_sf"/>
</dbReference>
<dbReference type="InterPro" id="IPR033729">
    <property type="entry name" value="SerRS_core"/>
</dbReference>
<dbReference type="InterPro" id="IPR010978">
    <property type="entry name" value="tRNA-bd_arm"/>
</dbReference>
<dbReference type="NCBIfam" id="TIGR00414">
    <property type="entry name" value="serS"/>
    <property type="match status" value="1"/>
</dbReference>
<dbReference type="PANTHER" id="PTHR11778">
    <property type="entry name" value="SERYL-TRNA SYNTHETASE"/>
    <property type="match status" value="1"/>
</dbReference>
<dbReference type="Pfam" id="PF02403">
    <property type="entry name" value="Seryl_tRNA_N"/>
    <property type="match status" value="1"/>
</dbReference>
<dbReference type="Pfam" id="PF00587">
    <property type="entry name" value="tRNA-synt_2b"/>
    <property type="match status" value="1"/>
</dbReference>
<dbReference type="PIRSF" id="PIRSF001529">
    <property type="entry name" value="Ser-tRNA-synth_IIa"/>
    <property type="match status" value="1"/>
</dbReference>
<dbReference type="PRINTS" id="PR00981">
    <property type="entry name" value="TRNASYNTHSER"/>
</dbReference>
<dbReference type="SUPFAM" id="SSF55681">
    <property type="entry name" value="Class II aaRS and biotin synthetases"/>
    <property type="match status" value="1"/>
</dbReference>
<dbReference type="SUPFAM" id="SSF46589">
    <property type="entry name" value="tRNA-binding arm"/>
    <property type="match status" value="1"/>
</dbReference>
<dbReference type="PROSITE" id="PS50862">
    <property type="entry name" value="AA_TRNA_LIGASE_II"/>
    <property type="match status" value="1"/>
</dbReference>
<protein>
    <recommendedName>
        <fullName evidence="1">Serine--tRNA ligase</fullName>
        <ecNumber evidence="1">6.1.1.11</ecNumber>
    </recommendedName>
    <alternativeName>
        <fullName evidence="1">Seryl-tRNA synthetase</fullName>
        <shortName evidence="1">SerRS</shortName>
    </alternativeName>
    <alternativeName>
        <fullName evidence="1">Seryl-tRNA(Ser/Sec) synthetase</fullName>
    </alternativeName>
</protein>
<proteinExistence type="inferred from homology"/>
<organism>
    <name type="scientific">Bifidobacterium adolescentis (strain ATCC 15703 / DSM 20083 / NCTC 11814 / E194a)</name>
    <dbReference type="NCBI Taxonomy" id="367928"/>
    <lineage>
        <taxon>Bacteria</taxon>
        <taxon>Bacillati</taxon>
        <taxon>Actinomycetota</taxon>
        <taxon>Actinomycetes</taxon>
        <taxon>Bifidobacteriales</taxon>
        <taxon>Bifidobacteriaceae</taxon>
        <taxon>Bifidobacterium</taxon>
    </lineage>
</organism>
<comment type="function">
    <text evidence="1">Catalyzes the attachment of serine to tRNA(Ser). Is also able to aminoacylate tRNA(Sec) with serine, to form the misacylated tRNA L-seryl-tRNA(Sec), which will be further converted into selenocysteinyl-tRNA(Sec).</text>
</comment>
<comment type="catalytic activity">
    <reaction evidence="1">
        <text>tRNA(Ser) + L-serine + ATP = L-seryl-tRNA(Ser) + AMP + diphosphate + H(+)</text>
        <dbReference type="Rhea" id="RHEA:12292"/>
        <dbReference type="Rhea" id="RHEA-COMP:9669"/>
        <dbReference type="Rhea" id="RHEA-COMP:9703"/>
        <dbReference type="ChEBI" id="CHEBI:15378"/>
        <dbReference type="ChEBI" id="CHEBI:30616"/>
        <dbReference type="ChEBI" id="CHEBI:33019"/>
        <dbReference type="ChEBI" id="CHEBI:33384"/>
        <dbReference type="ChEBI" id="CHEBI:78442"/>
        <dbReference type="ChEBI" id="CHEBI:78533"/>
        <dbReference type="ChEBI" id="CHEBI:456215"/>
        <dbReference type="EC" id="6.1.1.11"/>
    </reaction>
</comment>
<comment type="catalytic activity">
    <reaction evidence="1">
        <text>tRNA(Sec) + L-serine + ATP = L-seryl-tRNA(Sec) + AMP + diphosphate + H(+)</text>
        <dbReference type="Rhea" id="RHEA:42580"/>
        <dbReference type="Rhea" id="RHEA-COMP:9742"/>
        <dbReference type="Rhea" id="RHEA-COMP:10128"/>
        <dbReference type="ChEBI" id="CHEBI:15378"/>
        <dbReference type="ChEBI" id="CHEBI:30616"/>
        <dbReference type="ChEBI" id="CHEBI:33019"/>
        <dbReference type="ChEBI" id="CHEBI:33384"/>
        <dbReference type="ChEBI" id="CHEBI:78442"/>
        <dbReference type="ChEBI" id="CHEBI:78533"/>
        <dbReference type="ChEBI" id="CHEBI:456215"/>
        <dbReference type="EC" id="6.1.1.11"/>
    </reaction>
</comment>
<comment type="pathway">
    <text evidence="1">Aminoacyl-tRNA biosynthesis; selenocysteinyl-tRNA(Sec) biosynthesis; L-seryl-tRNA(Sec) from L-serine and tRNA(Sec): step 1/1.</text>
</comment>
<comment type="subunit">
    <text evidence="1">Homodimer. The tRNA molecule binds across the dimer.</text>
</comment>
<comment type="subcellular location">
    <subcellularLocation>
        <location evidence="1">Cytoplasm</location>
    </subcellularLocation>
</comment>
<comment type="domain">
    <text evidence="1">Consists of two distinct domains, a catalytic core and a N-terminal extension that is involved in tRNA binding.</text>
</comment>
<comment type="similarity">
    <text evidence="1">Belongs to the class-II aminoacyl-tRNA synthetase family. Type-1 seryl-tRNA synthetase subfamily.</text>
</comment>
<feature type="chain" id="PRO_1000019619" description="Serine--tRNA ligase">
    <location>
        <begin position="1"/>
        <end position="428"/>
    </location>
</feature>
<feature type="binding site" evidence="1">
    <location>
        <begin position="231"/>
        <end position="233"/>
    </location>
    <ligand>
        <name>L-serine</name>
        <dbReference type="ChEBI" id="CHEBI:33384"/>
    </ligand>
</feature>
<feature type="binding site" evidence="1">
    <location>
        <begin position="262"/>
        <end position="264"/>
    </location>
    <ligand>
        <name>ATP</name>
        <dbReference type="ChEBI" id="CHEBI:30616"/>
    </ligand>
</feature>
<feature type="binding site" evidence="1">
    <location>
        <position position="278"/>
    </location>
    <ligand>
        <name>ATP</name>
        <dbReference type="ChEBI" id="CHEBI:30616"/>
    </ligand>
</feature>
<feature type="binding site" evidence="1">
    <location>
        <position position="285"/>
    </location>
    <ligand>
        <name>L-serine</name>
        <dbReference type="ChEBI" id="CHEBI:33384"/>
    </ligand>
</feature>
<feature type="binding site" evidence="1">
    <location>
        <begin position="349"/>
        <end position="352"/>
    </location>
    <ligand>
        <name>ATP</name>
        <dbReference type="ChEBI" id="CHEBI:30616"/>
    </ligand>
</feature>
<feature type="binding site" evidence="1">
    <location>
        <position position="384"/>
    </location>
    <ligand>
        <name>L-serine</name>
        <dbReference type="ChEBI" id="CHEBI:33384"/>
    </ligand>
</feature>
<keyword id="KW-0030">Aminoacyl-tRNA synthetase</keyword>
<keyword id="KW-0067">ATP-binding</keyword>
<keyword id="KW-0963">Cytoplasm</keyword>
<keyword id="KW-0436">Ligase</keyword>
<keyword id="KW-0547">Nucleotide-binding</keyword>
<keyword id="KW-0648">Protein biosynthesis</keyword>
<keyword id="KW-1185">Reference proteome</keyword>
<sequence length="428" mass="47972">MLDIQFIREHADVVKESQRKRGESVELVDEVLRSDEVRRSSLKEFEAARAQQKEIGKKVAAAPADEKAKLIAATKELSQKVSEYKAAADAAAEEYTTAMWKLSNIVEPEAPEGGEDDYVVVKKVGQIRDFAAEGFEPKDHLTLGRGVAGIDMERGVKVGGSRFYFLRGQVARMQIAMLTMAVDQAEEHGFTLAITPTLVRPEVMRGTGFLNSHADEIYRLREPDDQYLVGTSEVALAGMHENEILNLENGPLRYCGWSSCYRREAGAAGKDTSGIIRVHQFDKVEMFVYAKQEDSYKEHEHLLAMEQEMLGKVEVPYRIIDTAAGDLGSSAARKFDCEAWVPTQGRYRELTSTSNCTEYQARRLNIRERMEDGNTRAVSTLNGTLATTRWLVAILENHQQKDGSIEIPKAMRPYMGGKEVIEPTKWEA</sequence>
<name>SYS_BIFAA</name>
<gene>
    <name evidence="1" type="primary">serS</name>
    <name type="ordered locus">BAD_0369</name>
</gene>